<sequence>MVKTPITEAIAAADTQGRFLGNTELQSARGRYERAAASLEAARGLTSNAQRLIDGATQAVYQKFPYTTQTPGPQFAADSRGKSKCARDVGHYLRIITYSLVAGGTGPLDEYLIAGLAEINSTFDLSPSWYVEALKHIKANHGLSGQAANEANTYIDYAINALS</sequence>
<comment type="function">
    <text>Light-harvesting photosynthetic bile pigment-protein from the phycobiliprotein complex (phycobilisome, PBS). Phycocyanin is the major phycobiliprotein in the PBS rod.</text>
</comment>
<comment type="subunit">
    <text evidence="2 3">Heterodimer of an alpha and a beta chain, which further assembles into trimers and the trimers into hexamers (By similarity). Part of 2 PBS rod complexes, the conventional PBS rod and a photosystem I-specific CpcL-PBS rod (PubMed:24550276).</text>
</comment>
<comment type="subcellular location">
    <subcellularLocation>
        <location evidence="3">Cellular thylakoid membrane</location>
        <topology evidence="1">Peripheral membrane protein</topology>
        <orientation evidence="1">Cytoplasmic side</orientation>
    </subcellularLocation>
    <text evidence="3">Part of the phycobilisome rod.</text>
</comment>
<comment type="PTM">
    <text evidence="1 2">Contains one covalently linked phycocyanobilin chromophore.</text>
</comment>
<comment type="similarity">
    <text evidence="4">Belongs to the phycobiliprotein family.</text>
</comment>
<protein>
    <recommendedName>
        <fullName>C-phycocyanin alpha subunit</fullName>
    </recommendedName>
</protein>
<keyword id="KW-0002">3D-structure</keyword>
<keyword id="KW-0042">Antenna complex</keyword>
<keyword id="KW-0089">Bile pigment</keyword>
<keyword id="KW-0157">Chromophore</keyword>
<keyword id="KW-0903">Direct protein sequencing</keyword>
<keyword id="KW-0249">Electron transport</keyword>
<keyword id="KW-0472">Membrane</keyword>
<keyword id="KW-0602">Photosynthesis</keyword>
<keyword id="KW-0605">Phycobilisome</keyword>
<keyword id="KW-1185">Reference proteome</keyword>
<keyword id="KW-0793">Thylakoid</keyword>
<keyword id="KW-0813">Transport</keyword>
<name>PHCA_NOSS1</name>
<accession>P07121</accession>
<evidence type="ECO:0000250" key="1"/>
<evidence type="ECO:0000250" key="2">
    <source>
        <dbReference type="UniProtKB" id="P13530"/>
    </source>
</evidence>
<evidence type="ECO:0000269" key="3">
    <source>
    </source>
</evidence>
<evidence type="ECO:0000305" key="4"/>
<dbReference type="EMBL" id="X05239">
    <property type="protein sequence ID" value="CAA28863.1"/>
    <property type="molecule type" value="Genomic_DNA"/>
</dbReference>
<dbReference type="EMBL" id="AF178757">
    <property type="protein sequence ID" value="AAG09317.1"/>
    <property type="molecule type" value="Genomic_DNA"/>
</dbReference>
<dbReference type="EMBL" id="BA000019">
    <property type="protein sequence ID" value="BAB72487.1"/>
    <property type="molecule type" value="Genomic_DNA"/>
</dbReference>
<dbReference type="PIR" id="AH1872">
    <property type="entry name" value="AH1872"/>
</dbReference>
<dbReference type="RefSeq" id="WP_010994705.1">
    <property type="nucleotide sequence ID" value="NZ_RSCN01000059.1"/>
</dbReference>
<dbReference type="PDB" id="7EYD">
    <property type="method" value="EM"/>
    <property type="resolution" value="3.90 A"/>
    <property type="chains" value="B1/B2/B3/B4/B5/B6/B7/BA/D1/D2/D3/D4/D5/D6/D7/DA/F1/F2/F3/F4/F5/F6/F7/FA/H1/H2/H3/H4/H5/H6=1-163"/>
</dbReference>
<dbReference type="PDBsum" id="7EYD"/>
<dbReference type="EMDB" id="EMD-31381"/>
<dbReference type="SMR" id="P07121"/>
<dbReference type="STRING" id="103690.gene:10492540"/>
<dbReference type="GeneID" id="58725694"/>
<dbReference type="KEGG" id="ana:alr0529"/>
<dbReference type="eggNOG" id="ENOG502Z85C">
    <property type="taxonomic scope" value="Bacteria"/>
</dbReference>
<dbReference type="OrthoDB" id="466183at2"/>
<dbReference type="Proteomes" id="UP000002483">
    <property type="component" value="Chromosome"/>
</dbReference>
<dbReference type="GO" id="GO:0030089">
    <property type="term" value="C:phycobilisome"/>
    <property type="evidence" value="ECO:0007669"/>
    <property type="project" value="UniProtKB-KW"/>
</dbReference>
<dbReference type="GO" id="GO:0031676">
    <property type="term" value="C:plasma membrane-derived thylakoid membrane"/>
    <property type="evidence" value="ECO:0007669"/>
    <property type="project" value="UniProtKB-SubCell"/>
</dbReference>
<dbReference type="GO" id="GO:0015979">
    <property type="term" value="P:photosynthesis"/>
    <property type="evidence" value="ECO:0007669"/>
    <property type="project" value="UniProtKB-KW"/>
</dbReference>
<dbReference type="CDD" id="cd14770">
    <property type="entry name" value="PC-PEC_alpha"/>
    <property type="match status" value="1"/>
</dbReference>
<dbReference type="Gene3D" id="1.10.490.20">
    <property type="entry name" value="Phycocyanins"/>
    <property type="match status" value="1"/>
</dbReference>
<dbReference type="InterPro" id="IPR009050">
    <property type="entry name" value="Globin-like_sf"/>
</dbReference>
<dbReference type="InterPro" id="IPR012128">
    <property type="entry name" value="Phycobilisome_asu/bsu"/>
</dbReference>
<dbReference type="InterPro" id="IPR038719">
    <property type="entry name" value="Phycobilisome_asu/bsu_sf"/>
</dbReference>
<dbReference type="InterPro" id="IPR006246">
    <property type="entry name" value="Phycocyanin_a"/>
</dbReference>
<dbReference type="NCBIfam" id="TIGR01338">
    <property type="entry name" value="phycocy_alpha"/>
    <property type="match status" value="1"/>
</dbReference>
<dbReference type="PANTHER" id="PTHR34011:SF4">
    <property type="entry name" value="C-PHYCOCYANIN ALPHA SUBUNIT"/>
    <property type="match status" value="1"/>
</dbReference>
<dbReference type="PANTHER" id="PTHR34011">
    <property type="entry name" value="PHYCOBILISOME 32.1 KDA LINKER POLYPEPTIDE, PHYCOCYANIN-ASSOCIATED, ROD 2-RELATED"/>
    <property type="match status" value="1"/>
</dbReference>
<dbReference type="Pfam" id="PF00502">
    <property type="entry name" value="Phycobilisome"/>
    <property type="match status" value="1"/>
</dbReference>
<dbReference type="PIRSF" id="PIRSF000081">
    <property type="entry name" value="Phycocyanin"/>
    <property type="match status" value="1"/>
</dbReference>
<dbReference type="SUPFAM" id="SSF46458">
    <property type="entry name" value="Globin-like"/>
    <property type="match status" value="1"/>
</dbReference>
<gene>
    <name type="primary">cpcA</name>
    <name type="ordered locus">alr0529</name>
</gene>
<proteinExistence type="evidence at protein level"/>
<feature type="initiator methionine" description="Removed" evidence="3">
    <location>
        <position position="1"/>
    </location>
</feature>
<feature type="chain" id="PRO_0000199117" description="C-phycocyanin alpha subunit">
    <location>
        <begin position="2"/>
        <end position="163"/>
    </location>
</feature>
<feature type="binding site" description="covalent" evidence="2">
    <location>
        <position position="85"/>
    </location>
    <ligand>
        <name>(2R,3E)-phycocyanobilin</name>
        <dbReference type="ChEBI" id="CHEBI:85275"/>
    </ligand>
</feature>
<reference key="1">
    <citation type="journal article" date="1987" name="EMBO J.">
        <title>Cloning and light regulation of expression of the phycocyanin operon of the cyanobacterium Anabaena.</title>
        <authorList>
            <person name="Belknap W.R."/>
            <person name="Haselkorn R."/>
        </authorList>
    </citation>
    <scope>NUCLEOTIDE SEQUENCE [GENOMIC DNA]</scope>
</reference>
<reference key="2">
    <citation type="journal article" date="2001" name="Anal. Biochem.">
        <title>Recombinant phycobiliproteins. Recombinant C-phycocyanins equipped with affinity tags, oligomerization, and biospecific recognition domains.</title>
        <authorList>
            <person name="Cai Y.A."/>
            <person name="Murphy J.T."/>
            <person name="Wedemayer G.J."/>
            <person name="Glazer A.N."/>
        </authorList>
    </citation>
    <scope>NUCLEOTIDE SEQUENCE [GENOMIC DNA]</scope>
</reference>
<reference key="3">
    <citation type="journal article" date="2001" name="DNA Res.">
        <title>Complete genomic sequence of the filamentous nitrogen-fixing cyanobacterium Anabaena sp. strain PCC 7120.</title>
        <authorList>
            <person name="Kaneko T."/>
            <person name="Nakamura Y."/>
            <person name="Wolk C.P."/>
            <person name="Kuritz T."/>
            <person name="Sasamoto S."/>
            <person name="Watanabe A."/>
            <person name="Iriguchi M."/>
            <person name="Ishikawa A."/>
            <person name="Kawashima K."/>
            <person name="Kimura T."/>
            <person name="Kishida Y."/>
            <person name="Kohara M."/>
            <person name="Matsumoto M."/>
            <person name="Matsuno A."/>
            <person name="Muraki A."/>
            <person name="Nakazaki N."/>
            <person name="Shimpo S."/>
            <person name="Sugimoto M."/>
            <person name="Takazawa M."/>
            <person name="Yamada M."/>
            <person name="Yasuda M."/>
            <person name="Tabata S."/>
        </authorList>
    </citation>
    <scope>NUCLEOTIDE SEQUENCE [LARGE SCALE GENOMIC DNA]</scope>
    <source>
        <strain>PCC 7120 / SAG 25.82 / UTEX 2576</strain>
    </source>
</reference>
<reference key="4">
    <citation type="journal article" date="2014" name="Proc. Natl. Acad. Sci. U.S.A.">
        <title>Attachment of phycobilisomes in an antenna-photosystem I supercomplex of cyanobacteria.</title>
        <authorList>
            <person name="Watanabe M."/>
            <person name="Semchonok D.A."/>
            <person name="Webber-Birungi M.T."/>
            <person name="Ehira S."/>
            <person name="Kondo K."/>
            <person name="Narikawa R."/>
            <person name="Ohmori M."/>
            <person name="Boekema E.J."/>
            <person name="Ikeuchi M."/>
        </authorList>
    </citation>
    <scope>PROTEIN SEQUENCE OF 2-12</scope>
    <scope>SUBUNIT</scope>
    <scope>SUBCELLULAR LOCATION</scope>
    <source>
        <strain>PCC 7120 / SAG 25.82 / UTEX 2576</strain>
    </source>
</reference>
<organism>
    <name type="scientific">Nostoc sp. (strain PCC 7120 / SAG 25.82 / UTEX 2576)</name>
    <dbReference type="NCBI Taxonomy" id="103690"/>
    <lineage>
        <taxon>Bacteria</taxon>
        <taxon>Bacillati</taxon>
        <taxon>Cyanobacteriota</taxon>
        <taxon>Cyanophyceae</taxon>
        <taxon>Nostocales</taxon>
        <taxon>Nostocaceae</taxon>
        <taxon>Nostoc</taxon>
    </lineage>
</organism>